<sequence>MRHRVAHRKFSRTSAHRMSMLLNLCISLIKHERISTTLPKAKEIRPYVEKLITIGKVYKEKNLVYGKRLLISKIKNPDIADKLIGILSVRYKSRNGGYTRIIKNGFRKGDSAPMAIIELVDRQIITVESNKNS</sequence>
<accession>Q2GH32</accession>
<organism>
    <name type="scientific">Ehrlichia chaffeensis (strain ATCC CRL-10679 / Arkansas)</name>
    <dbReference type="NCBI Taxonomy" id="205920"/>
    <lineage>
        <taxon>Bacteria</taxon>
        <taxon>Pseudomonadati</taxon>
        <taxon>Pseudomonadota</taxon>
        <taxon>Alphaproteobacteria</taxon>
        <taxon>Rickettsiales</taxon>
        <taxon>Anaplasmataceae</taxon>
        <taxon>Ehrlichia</taxon>
    </lineage>
</organism>
<keyword id="KW-1185">Reference proteome</keyword>
<keyword id="KW-0687">Ribonucleoprotein</keyword>
<keyword id="KW-0689">Ribosomal protein</keyword>
<proteinExistence type="inferred from homology"/>
<name>RL17_EHRCR</name>
<dbReference type="EMBL" id="CP000236">
    <property type="protein sequence ID" value="ABD44764.1"/>
    <property type="molecule type" value="Genomic_DNA"/>
</dbReference>
<dbReference type="RefSeq" id="WP_011452600.1">
    <property type="nucleotide sequence ID" value="NC_007799.1"/>
</dbReference>
<dbReference type="SMR" id="Q2GH32"/>
<dbReference type="STRING" id="205920.ECH_0433"/>
<dbReference type="KEGG" id="ech:ECH_0433"/>
<dbReference type="eggNOG" id="COG0203">
    <property type="taxonomic scope" value="Bacteria"/>
</dbReference>
<dbReference type="HOGENOM" id="CLU_074407_2_0_5"/>
<dbReference type="OrthoDB" id="9809073at2"/>
<dbReference type="Proteomes" id="UP000008320">
    <property type="component" value="Chromosome"/>
</dbReference>
<dbReference type="GO" id="GO:0022625">
    <property type="term" value="C:cytosolic large ribosomal subunit"/>
    <property type="evidence" value="ECO:0007669"/>
    <property type="project" value="TreeGrafter"/>
</dbReference>
<dbReference type="GO" id="GO:0003735">
    <property type="term" value="F:structural constituent of ribosome"/>
    <property type="evidence" value="ECO:0007669"/>
    <property type="project" value="InterPro"/>
</dbReference>
<dbReference type="GO" id="GO:0006412">
    <property type="term" value="P:translation"/>
    <property type="evidence" value="ECO:0007669"/>
    <property type="project" value="UniProtKB-UniRule"/>
</dbReference>
<dbReference type="Gene3D" id="3.90.1030.10">
    <property type="entry name" value="Ribosomal protein L17"/>
    <property type="match status" value="1"/>
</dbReference>
<dbReference type="HAMAP" id="MF_01368">
    <property type="entry name" value="Ribosomal_bL17"/>
    <property type="match status" value="1"/>
</dbReference>
<dbReference type="InterPro" id="IPR000456">
    <property type="entry name" value="Ribosomal_bL17"/>
</dbReference>
<dbReference type="InterPro" id="IPR047859">
    <property type="entry name" value="Ribosomal_bL17_CS"/>
</dbReference>
<dbReference type="InterPro" id="IPR036373">
    <property type="entry name" value="Ribosomal_bL17_sf"/>
</dbReference>
<dbReference type="NCBIfam" id="TIGR00059">
    <property type="entry name" value="L17"/>
    <property type="match status" value="1"/>
</dbReference>
<dbReference type="PANTHER" id="PTHR14413:SF16">
    <property type="entry name" value="LARGE RIBOSOMAL SUBUNIT PROTEIN BL17M"/>
    <property type="match status" value="1"/>
</dbReference>
<dbReference type="PANTHER" id="PTHR14413">
    <property type="entry name" value="RIBOSOMAL PROTEIN L17"/>
    <property type="match status" value="1"/>
</dbReference>
<dbReference type="Pfam" id="PF01196">
    <property type="entry name" value="Ribosomal_L17"/>
    <property type="match status" value="1"/>
</dbReference>
<dbReference type="SUPFAM" id="SSF64263">
    <property type="entry name" value="Prokaryotic ribosomal protein L17"/>
    <property type="match status" value="1"/>
</dbReference>
<dbReference type="PROSITE" id="PS01167">
    <property type="entry name" value="RIBOSOMAL_L17"/>
    <property type="match status" value="1"/>
</dbReference>
<reference key="1">
    <citation type="journal article" date="2006" name="PLoS Genet.">
        <title>Comparative genomics of emerging human ehrlichiosis agents.</title>
        <authorList>
            <person name="Dunning Hotopp J.C."/>
            <person name="Lin M."/>
            <person name="Madupu R."/>
            <person name="Crabtree J."/>
            <person name="Angiuoli S.V."/>
            <person name="Eisen J.A."/>
            <person name="Seshadri R."/>
            <person name="Ren Q."/>
            <person name="Wu M."/>
            <person name="Utterback T.R."/>
            <person name="Smith S."/>
            <person name="Lewis M."/>
            <person name="Khouri H."/>
            <person name="Zhang C."/>
            <person name="Niu H."/>
            <person name="Lin Q."/>
            <person name="Ohashi N."/>
            <person name="Zhi N."/>
            <person name="Nelson W.C."/>
            <person name="Brinkac L.M."/>
            <person name="Dodson R.J."/>
            <person name="Rosovitz M.J."/>
            <person name="Sundaram J.P."/>
            <person name="Daugherty S.C."/>
            <person name="Davidsen T."/>
            <person name="Durkin A.S."/>
            <person name="Gwinn M.L."/>
            <person name="Haft D.H."/>
            <person name="Selengut J.D."/>
            <person name="Sullivan S.A."/>
            <person name="Zafar N."/>
            <person name="Zhou L."/>
            <person name="Benahmed F."/>
            <person name="Forberger H."/>
            <person name="Halpin R."/>
            <person name="Mulligan S."/>
            <person name="Robinson J."/>
            <person name="White O."/>
            <person name="Rikihisa Y."/>
            <person name="Tettelin H."/>
        </authorList>
    </citation>
    <scope>NUCLEOTIDE SEQUENCE [LARGE SCALE GENOMIC DNA]</scope>
    <source>
        <strain>ATCC CRL-10679 / Arkansas</strain>
    </source>
</reference>
<evidence type="ECO:0000255" key="1">
    <source>
        <dbReference type="HAMAP-Rule" id="MF_01368"/>
    </source>
</evidence>
<evidence type="ECO:0000305" key="2"/>
<gene>
    <name evidence="1" type="primary">rplQ</name>
    <name type="ordered locus">ECH_0433</name>
</gene>
<feature type="chain" id="PRO_1000055819" description="Large ribosomal subunit protein bL17">
    <location>
        <begin position="1"/>
        <end position="133"/>
    </location>
</feature>
<protein>
    <recommendedName>
        <fullName evidence="1">Large ribosomal subunit protein bL17</fullName>
    </recommendedName>
    <alternativeName>
        <fullName evidence="2">50S ribosomal protein L17</fullName>
    </alternativeName>
</protein>
<comment type="subunit">
    <text evidence="1">Part of the 50S ribosomal subunit. Contacts protein L32.</text>
</comment>
<comment type="similarity">
    <text evidence="1">Belongs to the bacterial ribosomal protein bL17 family.</text>
</comment>